<evidence type="ECO:0000250" key="1"/>
<evidence type="ECO:0000255" key="2"/>
<evidence type="ECO:0000305" key="3"/>
<name>CDSA_RICCN</name>
<dbReference type="EC" id="2.7.7.41"/>
<dbReference type="EMBL" id="AE006914">
    <property type="protein sequence ID" value="AAL03127.1"/>
    <property type="molecule type" value="Genomic_DNA"/>
</dbReference>
<dbReference type="PIR" id="E97773">
    <property type="entry name" value="E97773"/>
</dbReference>
<dbReference type="RefSeq" id="WP_010977221.1">
    <property type="nucleotide sequence ID" value="NC_003103.1"/>
</dbReference>
<dbReference type="SMR" id="Q92I31"/>
<dbReference type="GeneID" id="927687"/>
<dbReference type="KEGG" id="rco:RC0589"/>
<dbReference type="PATRIC" id="fig|272944.4.peg.675"/>
<dbReference type="HOGENOM" id="CLU_037294_1_1_5"/>
<dbReference type="UniPathway" id="UPA00557">
    <property type="reaction ID" value="UER00614"/>
</dbReference>
<dbReference type="Proteomes" id="UP000000816">
    <property type="component" value="Chromosome"/>
</dbReference>
<dbReference type="GO" id="GO:0005886">
    <property type="term" value="C:plasma membrane"/>
    <property type="evidence" value="ECO:0007669"/>
    <property type="project" value="UniProtKB-SubCell"/>
</dbReference>
<dbReference type="GO" id="GO:0004605">
    <property type="term" value="F:phosphatidate cytidylyltransferase activity"/>
    <property type="evidence" value="ECO:0007669"/>
    <property type="project" value="UniProtKB-EC"/>
</dbReference>
<dbReference type="GO" id="GO:0016024">
    <property type="term" value="P:CDP-diacylglycerol biosynthetic process"/>
    <property type="evidence" value="ECO:0007669"/>
    <property type="project" value="UniProtKB-UniPathway"/>
</dbReference>
<dbReference type="InterPro" id="IPR000374">
    <property type="entry name" value="PC_trans"/>
</dbReference>
<dbReference type="PANTHER" id="PTHR46382">
    <property type="entry name" value="PHOSPHATIDATE CYTIDYLYLTRANSFERASE"/>
    <property type="match status" value="1"/>
</dbReference>
<dbReference type="PANTHER" id="PTHR46382:SF1">
    <property type="entry name" value="PHOSPHATIDATE CYTIDYLYLTRANSFERASE"/>
    <property type="match status" value="1"/>
</dbReference>
<dbReference type="Pfam" id="PF01148">
    <property type="entry name" value="CTP_transf_1"/>
    <property type="match status" value="1"/>
</dbReference>
<dbReference type="PROSITE" id="PS01315">
    <property type="entry name" value="CDS"/>
    <property type="match status" value="1"/>
</dbReference>
<organism>
    <name type="scientific">Rickettsia conorii (strain ATCC VR-613 / Malish 7)</name>
    <dbReference type="NCBI Taxonomy" id="272944"/>
    <lineage>
        <taxon>Bacteria</taxon>
        <taxon>Pseudomonadati</taxon>
        <taxon>Pseudomonadota</taxon>
        <taxon>Alphaproteobacteria</taxon>
        <taxon>Rickettsiales</taxon>
        <taxon>Rickettsiaceae</taxon>
        <taxon>Rickettsieae</taxon>
        <taxon>Rickettsia</taxon>
        <taxon>spotted fever group</taxon>
    </lineage>
</organism>
<keyword id="KW-1003">Cell membrane</keyword>
<keyword id="KW-0444">Lipid biosynthesis</keyword>
<keyword id="KW-0443">Lipid metabolism</keyword>
<keyword id="KW-0472">Membrane</keyword>
<keyword id="KW-0548">Nucleotidyltransferase</keyword>
<keyword id="KW-0594">Phospholipid biosynthesis</keyword>
<keyword id="KW-1208">Phospholipid metabolism</keyword>
<keyword id="KW-0808">Transferase</keyword>
<keyword id="KW-0812">Transmembrane</keyword>
<keyword id="KW-1133">Transmembrane helix</keyword>
<feature type="chain" id="PRO_0000281057" description="Phosphatidate cytidylyltransferase">
    <location>
        <begin position="1"/>
        <end position="230"/>
    </location>
</feature>
<feature type="transmembrane region" description="Helical" evidence="2">
    <location>
        <begin position="33"/>
        <end position="53"/>
    </location>
</feature>
<feature type="transmembrane region" description="Helical" evidence="2">
    <location>
        <begin position="67"/>
        <end position="87"/>
    </location>
</feature>
<feature type="transmembrane region" description="Helical" evidence="2">
    <location>
        <begin position="95"/>
        <end position="115"/>
    </location>
</feature>
<feature type="transmembrane region" description="Helical" evidence="2">
    <location>
        <begin position="133"/>
        <end position="153"/>
    </location>
</feature>
<feature type="transmembrane region" description="Helical" evidence="2">
    <location>
        <begin position="167"/>
        <end position="187"/>
    </location>
</feature>
<feature type="transmembrane region" description="Helical" evidence="2">
    <location>
        <begin position="206"/>
        <end position="226"/>
    </location>
</feature>
<protein>
    <recommendedName>
        <fullName>Phosphatidate cytidylyltransferase</fullName>
        <ecNumber>2.7.7.41</ecNumber>
    </recommendedName>
    <alternativeName>
        <fullName>CDP-DAG synthase</fullName>
    </alternativeName>
    <alternativeName>
        <fullName>CDP-DG synthase</fullName>
    </alternativeName>
    <alternativeName>
        <fullName>CDP-diacylglycerol synthase</fullName>
        <shortName>CDS</shortName>
    </alternativeName>
    <alternativeName>
        <fullName>CDP-diglyceride pyrophosphorylase</fullName>
    </alternativeName>
    <alternativeName>
        <fullName>CDP-diglyceride synthase</fullName>
    </alternativeName>
    <alternativeName>
        <fullName>CTP:phosphatidate cytidylyltransferase</fullName>
    </alternativeName>
</protein>
<accession>Q92I31</accession>
<comment type="catalytic activity">
    <reaction>
        <text>a 1,2-diacyl-sn-glycero-3-phosphate + CTP + H(+) = a CDP-1,2-diacyl-sn-glycerol + diphosphate</text>
        <dbReference type="Rhea" id="RHEA:16229"/>
        <dbReference type="ChEBI" id="CHEBI:15378"/>
        <dbReference type="ChEBI" id="CHEBI:33019"/>
        <dbReference type="ChEBI" id="CHEBI:37563"/>
        <dbReference type="ChEBI" id="CHEBI:58332"/>
        <dbReference type="ChEBI" id="CHEBI:58608"/>
        <dbReference type="EC" id="2.7.7.41"/>
    </reaction>
</comment>
<comment type="pathway">
    <text>Phospholipid metabolism; CDP-diacylglycerol biosynthesis; CDP-diacylglycerol from sn-glycerol 3-phosphate: step 3/3.</text>
</comment>
<comment type="subcellular location">
    <subcellularLocation>
        <location evidence="1">Cell membrane</location>
        <topology evidence="1">Multi-pass membrane protein</topology>
    </subcellularLocation>
</comment>
<comment type="similarity">
    <text evidence="3">Belongs to the CDS family.</text>
</comment>
<reference key="1">
    <citation type="journal article" date="2001" name="Science">
        <title>Mechanisms of evolution in Rickettsia conorii and R. prowazekii.</title>
        <authorList>
            <person name="Ogata H."/>
            <person name="Audic S."/>
            <person name="Renesto-Audiffren P."/>
            <person name="Fournier P.-E."/>
            <person name="Barbe V."/>
            <person name="Samson D."/>
            <person name="Roux V."/>
            <person name="Cossart P."/>
            <person name="Weissenbach J."/>
            <person name="Claverie J.-M."/>
            <person name="Raoult D."/>
        </authorList>
    </citation>
    <scope>NUCLEOTIDE SEQUENCE [LARGE SCALE GENOMIC DNA]</scope>
    <source>
        <strain>ATCC VR-613 / Malish 7</strain>
    </source>
</reference>
<sequence length="230" mass="26126">MITQKGKEHLVKDKQKSNIYLRILSGIVLVPLFVIAILWCKPLFYILMILVGTGMLSEWYNMTYSSIPDLLIGLIIIPIPISLLIFLSMEDTNRWLIMLYFCIMWSVDTFAMIGGKTFKGAKLAPKLSPKKTWSGLVTGVLSAGLVAVLVSFIPNFHIENYYFSNKIYLFIISCILALIAQLSDLFISYFKRKFNIKDSGHIIPGHGGVLDRFDSIILTTLILFLMKIYL</sequence>
<gene>
    <name type="primary">cdsA</name>
    <name type="ordered locus">RC0589</name>
</gene>
<proteinExistence type="inferred from homology"/>